<sequence>MSAKTDEILESLKSLSLLEASELVKQIEDAFGVSAAASAGVVMAAPGAAGGGDAAEEKTEFDVVLESFDAAAKIKVLKAVREATGLGLGDAKAMVEAAPKAIKEGVSKDDAEALKKAIEEVGGKVTIK</sequence>
<gene>
    <name evidence="1" type="primary">rplL</name>
    <name evidence="1" type="synonym">rpl12</name>
    <name type="ordered locus">sync_2724</name>
</gene>
<organism>
    <name type="scientific">Synechococcus sp. (strain CC9311)</name>
    <dbReference type="NCBI Taxonomy" id="64471"/>
    <lineage>
        <taxon>Bacteria</taxon>
        <taxon>Bacillati</taxon>
        <taxon>Cyanobacteriota</taxon>
        <taxon>Cyanophyceae</taxon>
        <taxon>Synechococcales</taxon>
        <taxon>Synechococcaceae</taxon>
        <taxon>Synechococcus</taxon>
    </lineage>
</organism>
<comment type="function">
    <text evidence="1">Forms part of the ribosomal stalk which helps the ribosome interact with GTP-bound translation factors. Is thus essential for accurate translation.</text>
</comment>
<comment type="subunit">
    <text evidence="1">Homodimer. Part of the ribosomal stalk of the 50S ribosomal subunit. Forms a multimeric L10(L12)X complex, where L10 forms an elongated spine to which 2 to 4 L12 dimers bind in a sequential fashion. Binds GTP-bound translation factors.</text>
</comment>
<comment type="similarity">
    <text evidence="1">Belongs to the bacterial ribosomal protein bL12 family.</text>
</comment>
<evidence type="ECO:0000255" key="1">
    <source>
        <dbReference type="HAMAP-Rule" id="MF_00368"/>
    </source>
</evidence>
<evidence type="ECO:0000305" key="2"/>
<name>RL7_SYNS3</name>
<accession>Q0I6L0</accession>
<dbReference type="EMBL" id="CP000435">
    <property type="protein sequence ID" value="ABI46765.1"/>
    <property type="molecule type" value="Genomic_DNA"/>
</dbReference>
<dbReference type="RefSeq" id="WP_011620616.1">
    <property type="nucleotide sequence ID" value="NC_008319.1"/>
</dbReference>
<dbReference type="SMR" id="Q0I6L0"/>
<dbReference type="STRING" id="64471.sync_2724"/>
<dbReference type="KEGG" id="syg:sync_2724"/>
<dbReference type="eggNOG" id="COG0222">
    <property type="taxonomic scope" value="Bacteria"/>
</dbReference>
<dbReference type="HOGENOM" id="CLU_086499_3_0_3"/>
<dbReference type="OrthoDB" id="9811748at2"/>
<dbReference type="Proteomes" id="UP000001961">
    <property type="component" value="Chromosome"/>
</dbReference>
<dbReference type="GO" id="GO:0022625">
    <property type="term" value="C:cytosolic large ribosomal subunit"/>
    <property type="evidence" value="ECO:0007669"/>
    <property type="project" value="TreeGrafter"/>
</dbReference>
<dbReference type="GO" id="GO:0003729">
    <property type="term" value="F:mRNA binding"/>
    <property type="evidence" value="ECO:0007669"/>
    <property type="project" value="TreeGrafter"/>
</dbReference>
<dbReference type="GO" id="GO:0003735">
    <property type="term" value="F:structural constituent of ribosome"/>
    <property type="evidence" value="ECO:0007669"/>
    <property type="project" value="InterPro"/>
</dbReference>
<dbReference type="GO" id="GO:0006412">
    <property type="term" value="P:translation"/>
    <property type="evidence" value="ECO:0007669"/>
    <property type="project" value="UniProtKB-UniRule"/>
</dbReference>
<dbReference type="CDD" id="cd00387">
    <property type="entry name" value="Ribosomal_L7_L12"/>
    <property type="match status" value="1"/>
</dbReference>
<dbReference type="FunFam" id="3.30.1390.10:FF:000001">
    <property type="entry name" value="50S ribosomal protein L7/L12"/>
    <property type="match status" value="1"/>
</dbReference>
<dbReference type="Gene3D" id="3.30.1390.10">
    <property type="match status" value="1"/>
</dbReference>
<dbReference type="Gene3D" id="1.20.5.710">
    <property type="entry name" value="Single helix bin"/>
    <property type="match status" value="1"/>
</dbReference>
<dbReference type="HAMAP" id="MF_00368">
    <property type="entry name" value="Ribosomal_bL12"/>
    <property type="match status" value="1"/>
</dbReference>
<dbReference type="InterPro" id="IPR000206">
    <property type="entry name" value="Ribosomal_bL12"/>
</dbReference>
<dbReference type="InterPro" id="IPR013823">
    <property type="entry name" value="Ribosomal_bL12_C"/>
</dbReference>
<dbReference type="InterPro" id="IPR014719">
    <property type="entry name" value="Ribosomal_bL12_C/ClpS-like"/>
</dbReference>
<dbReference type="InterPro" id="IPR008932">
    <property type="entry name" value="Ribosomal_bL12_oligo"/>
</dbReference>
<dbReference type="InterPro" id="IPR036235">
    <property type="entry name" value="Ribosomal_bL12_oligo_N_sf"/>
</dbReference>
<dbReference type="NCBIfam" id="TIGR00855">
    <property type="entry name" value="L12"/>
    <property type="match status" value="1"/>
</dbReference>
<dbReference type="PANTHER" id="PTHR45987">
    <property type="entry name" value="39S RIBOSOMAL PROTEIN L12"/>
    <property type="match status" value="1"/>
</dbReference>
<dbReference type="PANTHER" id="PTHR45987:SF4">
    <property type="entry name" value="LARGE RIBOSOMAL SUBUNIT PROTEIN BL12M"/>
    <property type="match status" value="1"/>
</dbReference>
<dbReference type="Pfam" id="PF00542">
    <property type="entry name" value="Ribosomal_L12"/>
    <property type="match status" value="1"/>
</dbReference>
<dbReference type="Pfam" id="PF16320">
    <property type="entry name" value="Ribosomal_L12_N"/>
    <property type="match status" value="1"/>
</dbReference>
<dbReference type="SUPFAM" id="SSF54736">
    <property type="entry name" value="ClpS-like"/>
    <property type="match status" value="1"/>
</dbReference>
<dbReference type="SUPFAM" id="SSF48300">
    <property type="entry name" value="Ribosomal protein L7/12, oligomerisation (N-terminal) domain"/>
    <property type="match status" value="1"/>
</dbReference>
<protein>
    <recommendedName>
        <fullName evidence="1">Large ribosomal subunit protein bL12</fullName>
    </recommendedName>
    <alternativeName>
        <fullName evidence="2">50S ribosomal protein L7/L12</fullName>
    </alternativeName>
</protein>
<proteinExistence type="inferred from homology"/>
<feature type="chain" id="PRO_1000007104" description="Large ribosomal subunit protein bL12">
    <location>
        <begin position="1"/>
        <end position="128"/>
    </location>
</feature>
<keyword id="KW-1185">Reference proteome</keyword>
<keyword id="KW-0687">Ribonucleoprotein</keyword>
<keyword id="KW-0689">Ribosomal protein</keyword>
<reference key="1">
    <citation type="journal article" date="2006" name="Proc. Natl. Acad. Sci. U.S.A.">
        <title>Genome sequence of Synechococcus CC9311: insights into adaptation to a coastal environment.</title>
        <authorList>
            <person name="Palenik B."/>
            <person name="Ren Q."/>
            <person name="Dupont C.L."/>
            <person name="Myers G.S."/>
            <person name="Heidelberg J.F."/>
            <person name="Badger J.H."/>
            <person name="Madupu R."/>
            <person name="Nelson W.C."/>
            <person name="Brinkac L.M."/>
            <person name="Dodson R.J."/>
            <person name="Durkin A.S."/>
            <person name="Daugherty S.C."/>
            <person name="Sullivan S.A."/>
            <person name="Khouri H."/>
            <person name="Mohamoud Y."/>
            <person name="Halpin R."/>
            <person name="Paulsen I.T."/>
        </authorList>
    </citation>
    <scope>NUCLEOTIDE SEQUENCE [LARGE SCALE GENOMIC DNA]</scope>
    <source>
        <strain>CC9311</strain>
    </source>
</reference>